<comment type="function">
    <text evidence="5">Transcription factor.</text>
</comment>
<comment type="subcellular location">
    <subcellularLocation>
        <location evidence="1 2">Nucleus</location>
    </subcellularLocation>
</comment>
<comment type="tissue specificity">
    <text evidence="3">Expressed in roots, stems, leaves, seed pods and flowers. Strongest expression in the stem.</text>
</comment>
<evidence type="ECO:0000250" key="1">
    <source>
        <dbReference type="UniProtKB" id="P27900"/>
    </source>
</evidence>
<evidence type="ECO:0000255" key="2">
    <source>
        <dbReference type="PROSITE-ProRule" id="PRU00625"/>
    </source>
</evidence>
<evidence type="ECO:0000269" key="3">
    <source>
    </source>
</evidence>
<evidence type="ECO:0000303" key="4">
    <source>
    </source>
</evidence>
<evidence type="ECO:0000305" key="5"/>
<proteinExistence type="evidence at transcript level"/>
<organism>
    <name type="scientific">Antirrhinum majus</name>
    <name type="common">Garden snapdragon</name>
    <dbReference type="NCBI Taxonomy" id="4151"/>
    <lineage>
        <taxon>Eukaryota</taxon>
        <taxon>Viridiplantae</taxon>
        <taxon>Streptophyta</taxon>
        <taxon>Embryophyta</taxon>
        <taxon>Tracheophyta</taxon>
        <taxon>Spermatophyta</taxon>
        <taxon>Magnoliopsida</taxon>
        <taxon>eudicotyledons</taxon>
        <taxon>Gunneridae</taxon>
        <taxon>Pentapetalae</taxon>
        <taxon>asterids</taxon>
        <taxon>lamiids</taxon>
        <taxon>Lamiales</taxon>
        <taxon>Plantaginaceae</taxon>
        <taxon>Antirrhineae</taxon>
        <taxon>Antirrhinum</taxon>
    </lineage>
</organism>
<keyword id="KW-0238">DNA-binding</keyword>
<keyword id="KW-0539">Nucleus</keyword>
<keyword id="KW-0677">Repeat</keyword>
<keyword id="KW-0804">Transcription</keyword>
<keyword id="KW-0805">Transcription regulation</keyword>
<dbReference type="PIR" id="JQ0961">
    <property type="entry name" value="JQ0961"/>
</dbReference>
<dbReference type="SMR" id="P81394"/>
<dbReference type="GO" id="GO:0005634">
    <property type="term" value="C:nucleus"/>
    <property type="evidence" value="ECO:0007669"/>
    <property type="project" value="UniProtKB-SubCell"/>
</dbReference>
<dbReference type="GO" id="GO:0003677">
    <property type="term" value="F:DNA binding"/>
    <property type="evidence" value="ECO:0007669"/>
    <property type="project" value="UniProtKB-KW"/>
</dbReference>
<dbReference type="CDD" id="cd00167">
    <property type="entry name" value="SANT"/>
    <property type="match status" value="2"/>
</dbReference>
<dbReference type="FunFam" id="1.10.10.60:FF:000394">
    <property type="entry name" value="MYB transcription factor"/>
    <property type="match status" value="1"/>
</dbReference>
<dbReference type="FunFam" id="1.10.10.60:FF:000001">
    <property type="entry name" value="MYB-related transcription factor"/>
    <property type="match status" value="1"/>
</dbReference>
<dbReference type="Gene3D" id="1.10.10.60">
    <property type="entry name" value="Homeodomain-like"/>
    <property type="match status" value="2"/>
</dbReference>
<dbReference type="InterPro" id="IPR009057">
    <property type="entry name" value="Homeodomain-like_sf"/>
</dbReference>
<dbReference type="InterPro" id="IPR017930">
    <property type="entry name" value="Myb_dom"/>
</dbReference>
<dbReference type="InterPro" id="IPR015495">
    <property type="entry name" value="Myb_TF_plants"/>
</dbReference>
<dbReference type="InterPro" id="IPR001005">
    <property type="entry name" value="SANT/Myb"/>
</dbReference>
<dbReference type="PANTHER" id="PTHR47994">
    <property type="entry name" value="F14D16.11-RELATED"/>
    <property type="match status" value="1"/>
</dbReference>
<dbReference type="PANTHER" id="PTHR47994:SF5">
    <property type="entry name" value="F14D16.11-RELATED"/>
    <property type="match status" value="1"/>
</dbReference>
<dbReference type="Pfam" id="PF00249">
    <property type="entry name" value="Myb_DNA-binding"/>
    <property type="match status" value="2"/>
</dbReference>
<dbReference type="SMART" id="SM00717">
    <property type="entry name" value="SANT"/>
    <property type="match status" value="2"/>
</dbReference>
<dbReference type="SUPFAM" id="SSF46689">
    <property type="entry name" value="Homeodomain-like"/>
    <property type="match status" value="1"/>
</dbReference>
<dbReference type="PROSITE" id="PS51294">
    <property type="entry name" value="HTH_MYB"/>
    <property type="match status" value="2"/>
</dbReference>
<gene>
    <name evidence="4" type="primary">MYB315</name>
</gene>
<protein>
    <recommendedName>
        <fullName>Myb-related protein 315</fullName>
    </recommendedName>
</protein>
<reference evidence="5" key="1">
    <citation type="journal article" date="1991" name="Plant Cell">
        <title>Expression patterns of myb genes from Antirrhinum flowers.</title>
        <authorList>
            <person name="Jackson D."/>
            <person name="Culianez-Macia F."/>
            <person name="Prescott A.G."/>
            <person name="Roberts K."/>
            <person name="Martin C."/>
        </authorList>
    </citation>
    <scope>NUCLEOTIDE SEQUENCE [MRNA]</scope>
    <scope>TISSUE SPECIFICITY</scope>
    <source>
        <strain evidence="3">cv. JI:522</strain>
        <tissue evidence="3">Flower bud</tissue>
    </source>
</reference>
<accession>P81394</accession>
<feature type="chain" id="PRO_0000291261" description="Myb-related protein 315">
    <location>
        <begin position="1"/>
        <end position="268"/>
    </location>
</feature>
<feature type="domain" description="HTH myb-type 1" evidence="2">
    <location>
        <begin position="9"/>
        <end position="61"/>
    </location>
</feature>
<feature type="domain" description="HTH myb-type 2" evidence="2">
    <location>
        <begin position="62"/>
        <end position="116"/>
    </location>
</feature>
<feature type="DNA-binding region" description="H-T-H motif" evidence="2">
    <location>
        <begin position="37"/>
        <end position="61"/>
    </location>
</feature>
<feature type="DNA-binding region" description="H-T-H motif" evidence="2">
    <location>
        <begin position="89"/>
        <end position="112"/>
    </location>
</feature>
<name>MYB15_ANTMA</name>
<sequence>MERQPCREKFGLKRGPWTEEEDQKLTSYVLKNGIQGWRVIPKLAGLSRCGKSCRLRWMNYLRPDLKKGPLTEMEENQIIELHAHLGNRWSKIALHIPGRTDNEIKNYWNTHIKKKLKLLGIDPNNHQPFEHKGNVDETKIESDTKESNSQDMKQIVNEVSRQGNNDQITESTSPEIKDEIVTSCQSDYLMHNNDLMSNRSSNYYSPSFSMEESLSNPKSTGQTSFAVSIHEESMKQWVQSVDSKLPWDCFNQLDEQLYLSFQQNQSNS</sequence>